<dbReference type="EC" id="3.1.13.5" evidence="1"/>
<dbReference type="EMBL" id="CP000319">
    <property type="protein sequence ID" value="ABE62909.1"/>
    <property type="status" value="ALT_INIT"/>
    <property type="molecule type" value="Genomic_DNA"/>
</dbReference>
<dbReference type="RefSeq" id="WP_041358930.1">
    <property type="nucleotide sequence ID" value="NC_007964.1"/>
</dbReference>
<dbReference type="SMR" id="Q1QLI8"/>
<dbReference type="STRING" id="323097.Nham_2112"/>
<dbReference type="KEGG" id="nha:Nham_2112"/>
<dbReference type="eggNOG" id="COG0349">
    <property type="taxonomic scope" value="Bacteria"/>
</dbReference>
<dbReference type="HOGENOM" id="CLU_042387_0_0_5"/>
<dbReference type="OrthoDB" id="9800549at2"/>
<dbReference type="Proteomes" id="UP000001953">
    <property type="component" value="Chromosome"/>
</dbReference>
<dbReference type="GO" id="GO:0005737">
    <property type="term" value="C:cytoplasm"/>
    <property type="evidence" value="ECO:0007669"/>
    <property type="project" value="UniProtKB-SubCell"/>
</dbReference>
<dbReference type="GO" id="GO:0008408">
    <property type="term" value="F:3'-5' exonuclease activity"/>
    <property type="evidence" value="ECO:0007669"/>
    <property type="project" value="InterPro"/>
</dbReference>
<dbReference type="GO" id="GO:0003676">
    <property type="term" value="F:nucleic acid binding"/>
    <property type="evidence" value="ECO:0007669"/>
    <property type="project" value="InterPro"/>
</dbReference>
<dbReference type="GO" id="GO:0000166">
    <property type="term" value="F:nucleotide binding"/>
    <property type="evidence" value="ECO:0007669"/>
    <property type="project" value="InterPro"/>
</dbReference>
<dbReference type="GO" id="GO:0033890">
    <property type="term" value="F:ribonuclease D activity"/>
    <property type="evidence" value="ECO:0007669"/>
    <property type="project" value="UniProtKB-UniRule"/>
</dbReference>
<dbReference type="GO" id="GO:0042780">
    <property type="term" value="P:tRNA 3'-end processing"/>
    <property type="evidence" value="ECO:0007669"/>
    <property type="project" value="UniProtKB-UniRule"/>
</dbReference>
<dbReference type="CDD" id="cd06142">
    <property type="entry name" value="RNaseD_exo"/>
    <property type="match status" value="1"/>
</dbReference>
<dbReference type="Gene3D" id="1.10.150.80">
    <property type="entry name" value="HRDC domain"/>
    <property type="match status" value="1"/>
</dbReference>
<dbReference type="Gene3D" id="3.30.420.10">
    <property type="entry name" value="Ribonuclease H-like superfamily/Ribonuclease H"/>
    <property type="match status" value="1"/>
</dbReference>
<dbReference type="HAMAP" id="MF_01899">
    <property type="entry name" value="RNase_D"/>
    <property type="match status" value="1"/>
</dbReference>
<dbReference type="InterPro" id="IPR002562">
    <property type="entry name" value="3'-5'_exonuclease_dom"/>
</dbReference>
<dbReference type="InterPro" id="IPR010997">
    <property type="entry name" value="HRDC-like_sf"/>
</dbReference>
<dbReference type="InterPro" id="IPR002121">
    <property type="entry name" value="HRDC_dom"/>
</dbReference>
<dbReference type="InterPro" id="IPR044876">
    <property type="entry name" value="HRDC_dom_sf"/>
</dbReference>
<dbReference type="InterPro" id="IPR006292">
    <property type="entry name" value="RNase_D"/>
</dbReference>
<dbReference type="InterPro" id="IPR051086">
    <property type="entry name" value="RNase_D-like"/>
</dbReference>
<dbReference type="InterPro" id="IPR012337">
    <property type="entry name" value="RNaseH-like_sf"/>
</dbReference>
<dbReference type="InterPro" id="IPR036397">
    <property type="entry name" value="RNaseH_sf"/>
</dbReference>
<dbReference type="NCBIfam" id="TIGR01388">
    <property type="entry name" value="rnd"/>
    <property type="match status" value="1"/>
</dbReference>
<dbReference type="PANTHER" id="PTHR47649">
    <property type="entry name" value="RIBONUCLEASE D"/>
    <property type="match status" value="1"/>
</dbReference>
<dbReference type="PANTHER" id="PTHR47649:SF1">
    <property type="entry name" value="RIBONUCLEASE D"/>
    <property type="match status" value="1"/>
</dbReference>
<dbReference type="Pfam" id="PF01612">
    <property type="entry name" value="DNA_pol_A_exo1"/>
    <property type="match status" value="1"/>
</dbReference>
<dbReference type="Pfam" id="PF00570">
    <property type="entry name" value="HRDC"/>
    <property type="match status" value="1"/>
</dbReference>
<dbReference type="SMART" id="SM00474">
    <property type="entry name" value="35EXOc"/>
    <property type="match status" value="1"/>
</dbReference>
<dbReference type="SUPFAM" id="SSF47819">
    <property type="entry name" value="HRDC-like"/>
    <property type="match status" value="2"/>
</dbReference>
<dbReference type="SUPFAM" id="SSF53098">
    <property type="entry name" value="Ribonuclease H-like"/>
    <property type="match status" value="1"/>
</dbReference>
<dbReference type="PROSITE" id="PS50967">
    <property type="entry name" value="HRDC"/>
    <property type="match status" value="1"/>
</dbReference>
<gene>
    <name evidence="1" type="primary">rnd</name>
    <name type="ordered locus">Nham_2112</name>
</gene>
<keyword id="KW-0963">Cytoplasm</keyword>
<keyword id="KW-0269">Exonuclease</keyword>
<keyword id="KW-0378">Hydrolase</keyword>
<keyword id="KW-0540">Nuclease</keyword>
<keyword id="KW-1185">Reference proteome</keyword>
<keyword id="KW-0819">tRNA processing</keyword>
<feature type="chain" id="PRO_0000411067" description="Ribonuclease D">
    <location>
        <begin position="1"/>
        <end position="382"/>
    </location>
</feature>
<feature type="domain" description="3'-5' exonuclease" evidence="1">
    <location>
        <begin position="4"/>
        <end position="169"/>
    </location>
</feature>
<feature type="domain" description="HRDC" evidence="1">
    <location>
        <begin position="208"/>
        <end position="289"/>
    </location>
</feature>
<accession>Q1QLI8</accession>
<name>RND_NITHX</name>
<protein>
    <recommendedName>
        <fullName evidence="1">Ribonuclease D</fullName>
        <shortName evidence="1">RNase D</shortName>
        <ecNumber evidence="1">3.1.13.5</ecNumber>
    </recommendedName>
</protein>
<organism>
    <name type="scientific">Nitrobacter hamburgensis (strain DSM 10229 / NCIMB 13809 / X14)</name>
    <dbReference type="NCBI Taxonomy" id="323097"/>
    <lineage>
        <taxon>Bacteria</taxon>
        <taxon>Pseudomonadati</taxon>
        <taxon>Pseudomonadota</taxon>
        <taxon>Alphaproteobacteria</taxon>
        <taxon>Hyphomicrobiales</taxon>
        <taxon>Nitrobacteraceae</taxon>
        <taxon>Nitrobacter</taxon>
    </lineage>
</organism>
<proteinExistence type="inferred from homology"/>
<evidence type="ECO:0000255" key="1">
    <source>
        <dbReference type="HAMAP-Rule" id="MF_01899"/>
    </source>
</evidence>
<evidence type="ECO:0000305" key="2"/>
<sequence>MDLITTTAELASVCARLANYPVVTVDTEFLRETTYYPLLCVVQMASPDEAVVVDALAEGIDLKPFFDLMSNERVLKVFHAARQDIEIVWHQAGIIPHPIFDTQVAAMVLGYGDSIAYDALVERVNGHRPDKTHRFTDWSRRPLTKDQLEYAVADVTHLRDVFAALDADLKKRGRGDWVSEEMEVLTSPKTYDFHPERAWERLKTRVRKPKDLAVMMEVAAWREQEAQSRNIPRSRVLKDDAVGDIAIHAPATPERLATLRSLPKGFEKSQWGADIVAAVQRGLARDPRELPKIEKPRNNTNGAATVELLKVLLRMTSERHAVASKVIATVDDLERIAADDAADVGALRGWRRELFGEAALALKHGQLALAIEKGRVVRVERS</sequence>
<comment type="function">
    <text evidence="1">Exonuclease involved in the 3' processing of various precursor tRNAs. Initiates hydrolysis at the 3'-terminus of an RNA molecule and releases 5'-mononucleotides.</text>
</comment>
<comment type="catalytic activity">
    <reaction evidence="1">
        <text>Exonucleolytic cleavage that removes extra residues from the 3'-terminus of tRNA to produce 5'-mononucleotides.</text>
        <dbReference type="EC" id="3.1.13.5"/>
    </reaction>
</comment>
<comment type="cofactor">
    <cofactor evidence="1">
        <name>a divalent metal cation</name>
        <dbReference type="ChEBI" id="CHEBI:60240"/>
    </cofactor>
</comment>
<comment type="subcellular location">
    <subcellularLocation>
        <location evidence="1">Cytoplasm</location>
    </subcellularLocation>
</comment>
<comment type="similarity">
    <text evidence="1">Belongs to the RNase D family.</text>
</comment>
<comment type="sequence caution" evidence="2">
    <conflict type="erroneous initiation">
        <sequence resource="EMBL-CDS" id="ABE62909"/>
    </conflict>
    <text>Extended N-terminus.</text>
</comment>
<reference key="1">
    <citation type="submission" date="2006-03" db="EMBL/GenBank/DDBJ databases">
        <title>Complete sequence of chromosome of Nitrobacter hamburgensis X14.</title>
        <authorList>
            <consortium name="US DOE Joint Genome Institute"/>
            <person name="Copeland A."/>
            <person name="Lucas S."/>
            <person name="Lapidus A."/>
            <person name="Barry K."/>
            <person name="Detter J.C."/>
            <person name="Glavina del Rio T."/>
            <person name="Hammon N."/>
            <person name="Israni S."/>
            <person name="Dalin E."/>
            <person name="Tice H."/>
            <person name="Pitluck S."/>
            <person name="Chain P."/>
            <person name="Malfatti S."/>
            <person name="Shin M."/>
            <person name="Vergez L."/>
            <person name="Schmutz J."/>
            <person name="Larimer F."/>
            <person name="Land M."/>
            <person name="Hauser L."/>
            <person name="Kyrpides N."/>
            <person name="Ivanova N."/>
            <person name="Ward B."/>
            <person name="Arp D."/>
            <person name="Klotz M."/>
            <person name="Stein L."/>
            <person name="O'Mullan G."/>
            <person name="Starkenburg S."/>
            <person name="Sayavedra L."/>
            <person name="Poret-Peterson A.T."/>
            <person name="Gentry M.E."/>
            <person name="Bruce D."/>
            <person name="Richardson P."/>
        </authorList>
    </citation>
    <scope>NUCLEOTIDE SEQUENCE [LARGE SCALE GENOMIC DNA]</scope>
    <source>
        <strain>DSM 10229 / NCIMB 13809 / X14</strain>
    </source>
</reference>